<keyword id="KW-0001">2Fe-2S</keyword>
<keyword id="KW-0004">4Fe-4S</keyword>
<keyword id="KW-0093">Biotin biosynthesis</keyword>
<keyword id="KW-0408">Iron</keyword>
<keyword id="KW-0411">Iron-sulfur</keyword>
<keyword id="KW-0479">Metal-binding</keyword>
<keyword id="KW-1185">Reference proteome</keyword>
<keyword id="KW-0949">S-adenosyl-L-methionine</keyword>
<keyword id="KW-0808">Transferase</keyword>
<evidence type="ECO:0000255" key="1">
    <source>
        <dbReference type="HAMAP-Rule" id="MF_01694"/>
    </source>
</evidence>
<evidence type="ECO:0000255" key="2">
    <source>
        <dbReference type="PROSITE-ProRule" id="PRU01266"/>
    </source>
</evidence>
<evidence type="ECO:0000256" key="3">
    <source>
        <dbReference type="SAM" id="MobiDB-lite"/>
    </source>
</evidence>
<protein>
    <recommendedName>
        <fullName evidence="1">Biotin synthase</fullName>
        <ecNumber evidence="1">2.8.1.6</ecNumber>
    </recommendedName>
</protein>
<gene>
    <name evidence="1" type="primary">bioB</name>
    <name type="ordered locus">NP_4236A</name>
</gene>
<accession>Q3INU3</accession>
<name>BIOB_NATPD</name>
<sequence length="370" mass="40111">MVYETGNETVDDAVQRALDGERLDRTDGLALLAQPVDELAAGADLLRRHFSDGTVDACSIVNAKAGNCAEDCGFCAQSAHFDTGIDTYGFLDPEDILDAAKRAEADGAQRFGIVVAEKGVSKEKRPDEWDDVIRAIRLVRDETDVEVDASLGVLTEEEAEILAAEGLNHYNHNIETSRRYFSEIVNTHSFDDRLKTLHRAKAAGMDLCAGVILGMGETPADRVDAAIELQEVGVSSLPVNILNPVEGTPIGDREAATISRTELIKTIAVYRFLHPEARVRLTGGREVNLDPDEQHLPFEAGADGLLTGDYLTTDGQTPADDIEIIERAGLEPNREANTFDPESVKARHRSPAAETASNANRTNATTETDD</sequence>
<dbReference type="EC" id="2.8.1.6" evidence="1"/>
<dbReference type="EMBL" id="CR936257">
    <property type="protein sequence ID" value="CAI50209.1"/>
    <property type="molecule type" value="Genomic_DNA"/>
</dbReference>
<dbReference type="RefSeq" id="WP_011323825.1">
    <property type="nucleotide sequence ID" value="NC_007426.1"/>
</dbReference>
<dbReference type="SMR" id="Q3INU3"/>
<dbReference type="STRING" id="348780.NP_4236A"/>
<dbReference type="EnsemblBacteria" id="CAI50209">
    <property type="protein sequence ID" value="CAI50209"/>
    <property type="gene ID" value="NP_4236A"/>
</dbReference>
<dbReference type="GeneID" id="3702551"/>
<dbReference type="KEGG" id="nph:NP_4236A"/>
<dbReference type="eggNOG" id="arCOG00658">
    <property type="taxonomic scope" value="Archaea"/>
</dbReference>
<dbReference type="HOGENOM" id="CLU_033172_2_1_2"/>
<dbReference type="OrthoDB" id="9264at2157"/>
<dbReference type="UniPathway" id="UPA00078">
    <property type="reaction ID" value="UER00162"/>
</dbReference>
<dbReference type="Proteomes" id="UP000002698">
    <property type="component" value="Chromosome"/>
</dbReference>
<dbReference type="GO" id="GO:0051537">
    <property type="term" value="F:2 iron, 2 sulfur cluster binding"/>
    <property type="evidence" value="ECO:0007669"/>
    <property type="project" value="UniProtKB-KW"/>
</dbReference>
<dbReference type="GO" id="GO:0051539">
    <property type="term" value="F:4 iron, 4 sulfur cluster binding"/>
    <property type="evidence" value="ECO:0007669"/>
    <property type="project" value="UniProtKB-KW"/>
</dbReference>
<dbReference type="GO" id="GO:0004076">
    <property type="term" value="F:biotin synthase activity"/>
    <property type="evidence" value="ECO:0007669"/>
    <property type="project" value="UniProtKB-UniRule"/>
</dbReference>
<dbReference type="GO" id="GO:0005506">
    <property type="term" value="F:iron ion binding"/>
    <property type="evidence" value="ECO:0007669"/>
    <property type="project" value="UniProtKB-UniRule"/>
</dbReference>
<dbReference type="GO" id="GO:0009102">
    <property type="term" value="P:biotin biosynthetic process"/>
    <property type="evidence" value="ECO:0007669"/>
    <property type="project" value="UniProtKB-UniRule"/>
</dbReference>
<dbReference type="CDD" id="cd01335">
    <property type="entry name" value="Radical_SAM"/>
    <property type="match status" value="1"/>
</dbReference>
<dbReference type="Gene3D" id="3.20.20.70">
    <property type="entry name" value="Aldolase class I"/>
    <property type="match status" value="1"/>
</dbReference>
<dbReference type="HAMAP" id="MF_01694">
    <property type="entry name" value="BioB"/>
    <property type="match status" value="1"/>
</dbReference>
<dbReference type="InterPro" id="IPR013785">
    <property type="entry name" value="Aldolase_TIM"/>
</dbReference>
<dbReference type="InterPro" id="IPR010722">
    <property type="entry name" value="BATS_dom"/>
</dbReference>
<dbReference type="InterPro" id="IPR002684">
    <property type="entry name" value="Biotin_synth/BioAB"/>
</dbReference>
<dbReference type="InterPro" id="IPR024177">
    <property type="entry name" value="Biotin_synthase"/>
</dbReference>
<dbReference type="InterPro" id="IPR006638">
    <property type="entry name" value="Elp3/MiaA/NifB-like_rSAM"/>
</dbReference>
<dbReference type="InterPro" id="IPR007197">
    <property type="entry name" value="rSAM"/>
</dbReference>
<dbReference type="NCBIfam" id="TIGR00433">
    <property type="entry name" value="bioB"/>
    <property type="match status" value="1"/>
</dbReference>
<dbReference type="PANTHER" id="PTHR22976">
    <property type="entry name" value="BIOTIN SYNTHASE"/>
    <property type="match status" value="1"/>
</dbReference>
<dbReference type="PANTHER" id="PTHR22976:SF2">
    <property type="entry name" value="BIOTIN SYNTHASE, MITOCHONDRIAL"/>
    <property type="match status" value="1"/>
</dbReference>
<dbReference type="Pfam" id="PF06968">
    <property type="entry name" value="BATS"/>
    <property type="match status" value="1"/>
</dbReference>
<dbReference type="Pfam" id="PF04055">
    <property type="entry name" value="Radical_SAM"/>
    <property type="match status" value="1"/>
</dbReference>
<dbReference type="PIRSF" id="PIRSF001619">
    <property type="entry name" value="Biotin_synth"/>
    <property type="match status" value="1"/>
</dbReference>
<dbReference type="SFLD" id="SFLDG01060">
    <property type="entry name" value="BATS_domain_containing"/>
    <property type="match status" value="1"/>
</dbReference>
<dbReference type="SFLD" id="SFLDG01278">
    <property type="entry name" value="biotin_synthase_like"/>
    <property type="match status" value="1"/>
</dbReference>
<dbReference type="SMART" id="SM00876">
    <property type="entry name" value="BATS"/>
    <property type="match status" value="1"/>
</dbReference>
<dbReference type="SMART" id="SM00729">
    <property type="entry name" value="Elp3"/>
    <property type="match status" value="1"/>
</dbReference>
<dbReference type="SUPFAM" id="SSF102114">
    <property type="entry name" value="Radical SAM enzymes"/>
    <property type="match status" value="1"/>
</dbReference>
<dbReference type="PROSITE" id="PS51918">
    <property type="entry name" value="RADICAL_SAM"/>
    <property type="match status" value="1"/>
</dbReference>
<organism>
    <name type="scientific">Natronomonas pharaonis (strain ATCC 35678 / DSM 2160 / CIP 103997 / JCM 8858 / NBRC 14720 / NCIMB 2260 / Gabara)</name>
    <name type="common">Halobacterium pharaonis</name>
    <dbReference type="NCBI Taxonomy" id="348780"/>
    <lineage>
        <taxon>Archaea</taxon>
        <taxon>Methanobacteriati</taxon>
        <taxon>Methanobacteriota</taxon>
        <taxon>Stenosarchaea group</taxon>
        <taxon>Halobacteria</taxon>
        <taxon>Halobacteriales</taxon>
        <taxon>Haloarculaceae</taxon>
        <taxon>Natronomonas</taxon>
    </lineage>
</organism>
<reference key="1">
    <citation type="journal article" date="2005" name="Genome Res.">
        <title>Living with two extremes: conclusions from the genome sequence of Natronomonas pharaonis.</title>
        <authorList>
            <person name="Falb M."/>
            <person name="Pfeiffer F."/>
            <person name="Palm P."/>
            <person name="Rodewald K."/>
            <person name="Hickmann V."/>
            <person name="Tittor J."/>
            <person name="Oesterhelt D."/>
        </authorList>
    </citation>
    <scope>NUCLEOTIDE SEQUENCE [LARGE SCALE GENOMIC DNA]</scope>
    <source>
        <strain>ATCC 35678 / DSM 2160 / CIP 103997 / JCM 8858 / NBRC 14720 / NCIMB 2260 / Gabara</strain>
    </source>
</reference>
<feature type="chain" id="PRO_0000381491" description="Biotin synthase">
    <location>
        <begin position="1"/>
        <end position="370"/>
    </location>
</feature>
<feature type="domain" description="Radical SAM core" evidence="2">
    <location>
        <begin position="50"/>
        <end position="276"/>
    </location>
</feature>
<feature type="region of interest" description="Disordered" evidence="3">
    <location>
        <begin position="328"/>
        <end position="370"/>
    </location>
</feature>
<feature type="compositionally biased region" description="Low complexity" evidence="3">
    <location>
        <begin position="352"/>
        <end position="370"/>
    </location>
</feature>
<feature type="binding site" evidence="1">
    <location>
        <position position="68"/>
    </location>
    <ligand>
        <name>[4Fe-4S] cluster</name>
        <dbReference type="ChEBI" id="CHEBI:49883"/>
        <note>4Fe-4S-S-AdoMet</note>
    </ligand>
</feature>
<feature type="binding site" evidence="1">
    <location>
        <position position="72"/>
    </location>
    <ligand>
        <name>[4Fe-4S] cluster</name>
        <dbReference type="ChEBI" id="CHEBI:49883"/>
        <note>4Fe-4S-S-AdoMet</note>
    </ligand>
</feature>
<feature type="binding site" evidence="1">
    <location>
        <position position="75"/>
    </location>
    <ligand>
        <name>[4Fe-4S] cluster</name>
        <dbReference type="ChEBI" id="CHEBI:49883"/>
        <note>4Fe-4S-S-AdoMet</note>
    </ligand>
</feature>
<feature type="binding site" evidence="1">
    <location>
        <position position="208"/>
    </location>
    <ligand>
        <name>[2Fe-2S] cluster</name>
        <dbReference type="ChEBI" id="CHEBI:190135"/>
    </ligand>
</feature>
<feature type="binding site" evidence="1">
    <location>
        <position position="280"/>
    </location>
    <ligand>
        <name>[2Fe-2S] cluster</name>
        <dbReference type="ChEBI" id="CHEBI:190135"/>
    </ligand>
</feature>
<comment type="function">
    <text evidence="1">Catalyzes the conversion of dethiobiotin (DTB) to biotin by the insertion of a sulfur atom into dethiobiotin via a radical-based mechanism.</text>
</comment>
<comment type="catalytic activity">
    <reaction evidence="1">
        <text>(4R,5S)-dethiobiotin + (sulfur carrier)-SH + 2 reduced [2Fe-2S]-[ferredoxin] + 2 S-adenosyl-L-methionine = (sulfur carrier)-H + biotin + 2 5'-deoxyadenosine + 2 L-methionine + 2 oxidized [2Fe-2S]-[ferredoxin]</text>
        <dbReference type="Rhea" id="RHEA:22060"/>
        <dbReference type="Rhea" id="RHEA-COMP:10000"/>
        <dbReference type="Rhea" id="RHEA-COMP:10001"/>
        <dbReference type="Rhea" id="RHEA-COMP:14737"/>
        <dbReference type="Rhea" id="RHEA-COMP:14739"/>
        <dbReference type="ChEBI" id="CHEBI:17319"/>
        <dbReference type="ChEBI" id="CHEBI:29917"/>
        <dbReference type="ChEBI" id="CHEBI:33737"/>
        <dbReference type="ChEBI" id="CHEBI:33738"/>
        <dbReference type="ChEBI" id="CHEBI:57586"/>
        <dbReference type="ChEBI" id="CHEBI:57844"/>
        <dbReference type="ChEBI" id="CHEBI:59789"/>
        <dbReference type="ChEBI" id="CHEBI:64428"/>
        <dbReference type="ChEBI" id="CHEBI:149473"/>
        <dbReference type="EC" id="2.8.1.6"/>
    </reaction>
</comment>
<comment type="cofactor">
    <cofactor evidence="1">
        <name>[4Fe-4S] cluster</name>
        <dbReference type="ChEBI" id="CHEBI:49883"/>
    </cofactor>
    <text evidence="1">Binds 1 [4Fe-4S] cluster. The cluster is coordinated with 3 cysteines and an exchangeable S-adenosyl-L-methionine.</text>
</comment>
<comment type="cofactor">
    <cofactor evidence="1">
        <name>[2Fe-2S] cluster</name>
        <dbReference type="ChEBI" id="CHEBI:190135"/>
    </cofactor>
    <text evidence="1">Binds 1 [2Fe-2S] cluster. The cluster is coordinated with 3 cysteines and 1 arginine.</text>
</comment>
<comment type="pathway">
    <text evidence="1">Cofactor biosynthesis; biotin biosynthesis; biotin from 7,8-diaminononanoate: step 2/2.</text>
</comment>
<comment type="subunit">
    <text evidence="1">Homodimer.</text>
</comment>
<comment type="similarity">
    <text evidence="1">Belongs to the radical SAM superfamily. Biotin synthase family.</text>
</comment>
<proteinExistence type="inferred from homology"/>